<dbReference type="EMBL" id="AE017220">
    <property type="protein sequence ID" value="AAX68261.1"/>
    <property type="status" value="ALT_INIT"/>
    <property type="molecule type" value="Genomic_DNA"/>
</dbReference>
<dbReference type="RefSeq" id="WP_000532939.1">
    <property type="nucleotide sequence ID" value="NC_006905.1"/>
</dbReference>
<dbReference type="SMR" id="Q57GA1"/>
<dbReference type="KEGG" id="sec:SCH_4355"/>
<dbReference type="HOGENOM" id="CLU_062974_2_0_6"/>
<dbReference type="Proteomes" id="UP000000538">
    <property type="component" value="Chromosome"/>
</dbReference>
<dbReference type="GO" id="GO:0005829">
    <property type="term" value="C:cytosol"/>
    <property type="evidence" value="ECO:0007669"/>
    <property type="project" value="TreeGrafter"/>
</dbReference>
<dbReference type="GO" id="GO:0003677">
    <property type="term" value="F:DNA binding"/>
    <property type="evidence" value="ECO:0007669"/>
    <property type="project" value="UniProtKB-UniRule"/>
</dbReference>
<dbReference type="GO" id="GO:0006355">
    <property type="term" value="P:regulation of DNA-templated transcription"/>
    <property type="evidence" value="ECO:0007669"/>
    <property type="project" value="UniProtKB-UniRule"/>
</dbReference>
<dbReference type="FunFam" id="1.10.10.200:FF:000003">
    <property type="entry name" value="Probable transcriptional regulatory protein YeeN"/>
    <property type="match status" value="1"/>
</dbReference>
<dbReference type="FunFam" id="3.30.70.980:FF:000004">
    <property type="entry name" value="Probable transcriptional regulatory protein YeeN"/>
    <property type="match status" value="1"/>
</dbReference>
<dbReference type="Gene3D" id="1.10.10.200">
    <property type="match status" value="1"/>
</dbReference>
<dbReference type="Gene3D" id="3.30.70.980">
    <property type="match status" value="2"/>
</dbReference>
<dbReference type="HAMAP" id="MF_00693">
    <property type="entry name" value="Transcrip_reg_TACO1"/>
    <property type="match status" value="1"/>
</dbReference>
<dbReference type="HAMAP" id="MF_00918">
    <property type="entry name" value="Transcrip_reg_TACO1_YeeN"/>
    <property type="match status" value="1"/>
</dbReference>
<dbReference type="InterPro" id="IPR017856">
    <property type="entry name" value="Integrase-like_N"/>
</dbReference>
<dbReference type="InterPro" id="IPR048300">
    <property type="entry name" value="TACO1_YebC-like_2nd/3rd_dom"/>
</dbReference>
<dbReference type="InterPro" id="IPR049083">
    <property type="entry name" value="TACO1_YebC_N"/>
</dbReference>
<dbReference type="InterPro" id="IPR002876">
    <property type="entry name" value="Transcrip_reg_TACO1-like"/>
</dbReference>
<dbReference type="InterPro" id="IPR026564">
    <property type="entry name" value="Transcrip_reg_TACO1-like_dom3"/>
</dbReference>
<dbReference type="InterPro" id="IPR026562">
    <property type="entry name" value="Transcrip_reg_TACO1_YeeN"/>
</dbReference>
<dbReference type="InterPro" id="IPR029072">
    <property type="entry name" value="YebC-like"/>
</dbReference>
<dbReference type="NCBIfam" id="NF009044">
    <property type="entry name" value="PRK12378.1"/>
    <property type="match status" value="1"/>
</dbReference>
<dbReference type="NCBIfam" id="TIGR01033">
    <property type="entry name" value="YebC/PmpR family DNA-binding transcriptional regulator"/>
    <property type="match status" value="1"/>
</dbReference>
<dbReference type="PANTHER" id="PTHR12532">
    <property type="entry name" value="TRANSLATIONAL ACTIVATOR OF CYTOCHROME C OXIDASE 1"/>
    <property type="match status" value="1"/>
</dbReference>
<dbReference type="PANTHER" id="PTHR12532:SF0">
    <property type="entry name" value="TRANSLATIONAL ACTIVATOR OF CYTOCHROME C OXIDASE 1"/>
    <property type="match status" value="1"/>
</dbReference>
<dbReference type="Pfam" id="PF20772">
    <property type="entry name" value="TACO1_YebC_N"/>
    <property type="match status" value="1"/>
</dbReference>
<dbReference type="Pfam" id="PF01709">
    <property type="entry name" value="Transcrip_reg"/>
    <property type="match status" value="1"/>
</dbReference>
<dbReference type="SUPFAM" id="SSF75625">
    <property type="entry name" value="YebC-like"/>
    <property type="match status" value="1"/>
</dbReference>
<feature type="chain" id="PRO_0000257127" description="Probable transcriptional regulatory protein YeeN">
    <location>
        <begin position="1"/>
        <end position="238"/>
    </location>
</feature>
<name>YEEN_SALCH</name>
<comment type="subcellular location">
    <subcellularLocation>
        <location evidence="1">Cytoplasm</location>
    </subcellularLocation>
</comment>
<comment type="similarity">
    <text evidence="1">Belongs to the TACO1 family. YeeN subfamily.</text>
</comment>
<comment type="sequence caution" evidence="2">
    <conflict type="erroneous initiation">
        <sequence resource="EMBL-CDS" id="AAX68261"/>
    </conflict>
</comment>
<organism>
    <name type="scientific">Salmonella choleraesuis (strain SC-B67)</name>
    <dbReference type="NCBI Taxonomy" id="321314"/>
    <lineage>
        <taxon>Bacteria</taxon>
        <taxon>Pseudomonadati</taxon>
        <taxon>Pseudomonadota</taxon>
        <taxon>Gammaproteobacteria</taxon>
        <taxon>Enterobacterales</taxon>
        <taxon>Enterobacteriaceae</taxon>
        <taxon>Salmonella</taxon>
    </lineage>
</organism>
<proteinExistence type="inferred from homology"/>
<gene>
    <name evidence="1" type="primary">yeeN</name>
    <name type="ordered locus">SCH_4355</name>
</gene>
<sequence length="238" mass="25741">MGRKWANIVAKKTAKDGATSKVYAKFGVEIYAAAKQGEPDPESNSALKFVIERAKQAQVPKHVIDKAIDKAKGGGDETFVQGRYEGFGPNGSMVIAETLTSNVNRTIANIRTIFNKKGGNIGAAGAVSYMFDNTGVIVFKGTDPDHIFEILLDAEVDVRDVTEEEGNIVIYTEATDLHKGIAALKAAGITEFSTTELEMIAQSEVELSPEDLEIFEGLVDALEDDDDVQKVYHNVANL</sequence>
<keyword id="KW-0963">Cytoplasm</keyword>
<keyword id="KW-0238">DNA-binding</keyword>
<keyword id="KW-0804">Transcription</keyword>
<keyword id="KW-0805">Transcription regulation</keyword>
<evidence type="ECO:0000255" key="1">
    <source>
        <dbReference type="HAMAP-Rule" id="MF_00918"/>
    </source>
</evidence>
<evidence type="ECO:0000305" key="2"/>
<accession>Q57GA1</accession>
<reference key="1">
    <citation type="journal article" date="2005" name="Nucleic Acids Res.">
        <title>The genome sequence of Salmonella enterica serovar Choleraesuis, a highly invasive and resistant zoonotic pathogen.</title>
        <authorList>
            <person name="Chiu C.-H."/>
            <person name="Tang P."/>
            <person name="Chu C."/>
            <person name="Hu S."/>
            <person name="Bao Q."/>
            <person name="Yu J."/>
            <person name="Chou Y.-Y."/>
            <person name="Wang H.-S."/>
            <person name="Lee Y.-S."/>
        </authorList>
    </citation>
    <scope>NUCLEOTIDE SEQUENCE [LARGE SCALE GENOMIC DNA]</scope>
    <source>
        <strain>SC-B67</strain>
    </source>
</reference>
<protein>
    <recommendedName>
        <fullName evidence="1">Probable transcriptional regulatory protein YeeN</fullName>
    </recommendedName>
</protein>